<gene>
    <name evidence="1" type="primary">moaC</name>
    <name type="ordered locus">EcSMS35_0806</name>
</gene>
<evidence type="ECO:0000255" key="1">
    <source>
        <dbReference type="HAMAP-Rule" id="MF_01224"/>
    </source>
</evidence>
<comment type="function">
    <text evidence="1">Catalyzes the conversion of (8S)-3',8-cyclo-7,8-dihydroguanosine 5'-triphosphate to cyclic pyranopterin monophosphate (cPMP).</text>
</comment>
<comment type="catalytic activity">
    <reaction evidence="1">
        <text>(8S)-3',8-cyclo-7,8-dihydroguanosine 5'-triphosphate = cyclic pyranopterin phosphate + diphosphate</text>
        <dbReference type="Rhea" id="RHEA:49580"/>
        <dbReference type="ChEBI" id="CHEBI:33019"/>
        <dbReference type="ChEBI" id="CHEBI:59648"/>
        <dbReference type="ChEBI" id="CHEBI:131766"/>
        <dbReference type="EC" id="4.6.1.17"/>
    </reaction>
</comment>
<comment type="pathway">
    <text evidence="1">Cofactor biosynthesis; molybdopterin biosynthesis.</text>
</comment>
<comment type="subunit">
    <text evidence="1">Homohexamer; trimer of dimers.</text>
</comment>
<comment type="similarity">
    <text evidence="1">Belongs to the MoaC family.</text>
</comment>
<organism>
    <name type="scientific">Escherichia coli (strain SMS-3-5 / SECEC)</name>
    <dbReference type="NCBI Taxonomy" id="439855"/>
    <lineage>
        <taxon>Bacteria</taxon>
        <taxon>Pseudomonadati</taxon>
        <taxon>Pseudomonadota</taxon>
        <taxon>Gammaproteobacteria</taxon>
        <taxon>Enterobacterales</taxon>
        <taxon>Enterobacteriaceae</taxon>
        <taxon>Escherichia</taxon>
    </lineage>
</organism>
<dbReference type="EC" id="4.6.1.17" evidence="1"/>
<dbReference type="EMBL" id="CP000970">
    <property type="protein sequence ID" value="ACB19036.1"/>
    <property type="molecule type" value="Genomic_DNA"/>
</dbReference>
<dbReference type="RefSeq" id="WP_000080885.1">
    <property type="nucleotide sequence ID" value="NC_010498.1"/>
</dbReference>
<dbReference type="SMR" id="B1LM74"/>
<dbReference type="GeneID" id="86945666"/>
<dbReference type="KEGG" id="ecm:EcSMS35_0806"/>
<dbReference type="HOGENOM" id="CLU_074693_1_1_6"/>
<dbReference type="UniPathway" id="UPA00344"/>
<dbReference type="Proteomes" id="UP000007011">
    <property type="component" value="Chromosome"/>
</dbReference>
<dbReference type="GO" id="GO:0061799">
    <property type="term" value="F:cyclic pyranopterin monophosphate synthase activity"/>
    <property type="evidence" value="ECO:0007669"/>
    <property type="project" value="UniProtKB-UniRule"/>
</dbReference>
<dbReference type="GO" id="GO:0006777">
    <property type="term" value="P:Mo-molybdopterin cofactor biosynthetic process"/>
    <property type="evidence" value="ECO:0007669"/>
    <property type="project" value="UniProtKB-UniRule"/>
</dbReference>
<dbReference type="CDD" id="cd01420">
    <property type="entry name" value="MoaC_PE"/>
    <property type="match status" value="1"/>
</dbReference>
<dbReference type="FunFam" id="3.30.70.640:FF:000001">
    <property type="entry name" value="Cyclic pyranopterin monophosphate synthase"/>
    <property type="match status" value="1"/>
</dbReference>
<dbReference type="Gene3D" id="3.30.70.640">
    <property type="entry name" value="Molybdopterin cofactor biosynthesis C (MoaC) domain"/>
    <property type="match status" value="1"/>
</dbReference>
<dbReference type="HAMAP" id="MF_01224_B">
    <property type="entry name" value="MoaC_B"/>
    <property type="match status" value="1"/>
</dbReference>
<dbReference type="InterPro" id="IPR023045">
    <property type="entry name" value="MoaC"/>
</dbReference>
<dbReference type="InterPro" id="IPR047594">
    <property type="entry name" value="MoaC_bact/euk"/>
</dbReference>
<dbReference type="InterPro" id="IPR036522">
    <property type="entry name" value="MoaC_sf"/>
</dbReference>
<dbReference type="InterPro" id="IPR050105">
    <property type="entry name" value="MoCo_biosynth_MoaA/MoaC"/>
</dbReference>
<dbReference type="InterPro" id="IPR002820">
    <property type="entry name" value="Mopterin_CF_biosynth-C_dom"/>
</dbReference>
<dbReference type="NCBIfam" id="TIGR00581">
    <property type="entry name" value="moaC"/>
    <property type="match status" value="1"/>
</dbReference>
<dbReference type="NCBIfam" id="NF006870">
    <property type="entry name" value="PRK09364.1"/>
    <property type="match status" value="1"/>
</dbReference>
<dbReference type="PANTHER" id="PTHR22960">
    <property type="entry name" value="MOLYBDOPTERIN COFACTOR SYNTHESIS PROTEIN A"/>
    <property type="match status" value="1"/>
</dbReference>
<dbReference type="Pfam" id="PF01967">
    <property type="entry name" value="MoaC"/>
    <property type="match status" value="1"/>
</dbReference>
<dbReference type="SUPFAM" id="SSF55040">
    <property type="entry name" value="Molybdenum cofactor biosynthesis protein C, MoaC"/>
    <property type="match status" value="1"/>
</dbReference>
<accession>B1LM74</accession>
<reference key="1">
    <citation type="journal article" date="2008" name="J. Bacteriol.">
        <title>Insights into the environmental resistance gene pool from the genome sequence of the multidrug-resistant environmental isolate Escherichia coli SMS-3-5.</title>
        <authorList>
            <person name="Fricke W.F."/>
            <person name="Wright M.S."/>
            <person name="Lindell A.H."/>
            <person name="Harkins D.M."/>
            <person name="Baker-Austin C."/>
            <person name="Ravel J."/>
            <person name="Stepanauskas R."/>
        </authorList>
    </citation>
    <scope>NUCLEOTIDE SEQUENCE [LARGE SCALE GENOMIC DNA]</scope>
    <source>
        <strain>SMS-3-5 / SECEC</strain>
    </source>
</reference>
<sequence length="161" mass="17467">MSQLTHINAAGEAHMVDVSAKAETVREARAEAFVTMRSETLAMIIDGRHHKGDVFATARIAGIQAAKRTWDLIPLCHPLMLSKVEVNLQAEPEHNRVRIETLCRLTGKTGVEMEALTAASVAALTIYDMCKAVQKDMVIGPVRLLAKSGGKSGDFKVEADD</sequence>
<name>MOAC_ECOSM</name>
<feature type="chain" id="PRO_1000139267" description="Cyclic pyranopterin monophosphate synthase">
    <location>
        <begin position="1"/>
        <end position="161"/>
    </location>
</feature>
<feature type="active site" evidence="1">
    <location>
        <position position="128"/>
    </location>
</feature>
<feature type="binding site" evidence="1">
    <location>
        <begin position="75"/>
        <end position="77"/>
    </location>
    <ligand>
        <name>substrate</name>
    </ligand>
</feature>
<feature type="binding site" evidence="1">
    <location>
        <begin position="113"/>
        <end position="114"/>
    </location>
    <ligand>
        <name>substrate</name>
    </ligand>
</feature>
<keyword id="KW-0456">Lyase</keyword>
<keyword id="KW-0501">Molybdenum cofactor biosynthesis</keyword>
<protein>
    <recommendedName>
        <fullName evidence="1">Cyclic pyranopterin monophosphate synthase</fullName>
        <ecNumber evidence="1">4.6.1.17</ecNumber>
    </recommendedName>
    <alternativeName>
        <fullName evidence="1">Molybdenum cofactor biosynthesis protein C</fullName>
    </alternativeName>
</protein>
<proteinExistence type="inferred from homology"/>